<reference key="1">
    <citation type="journal article" date="2004" name="Science">
        <title>A predator unmasked: life cycle of Bdellovibrio bacteriovorus from a genomic perspective.</title>
        <authorList>
            <person name="Rendulic S."/>
            <person name="Jagtap P."/>
            <person name="Rosinus A."/>
            <person name="Eppinger M."/>
            <person name="Baar C."/>
            <person name="Lanz C."/>
            <person name="Keller H."/>
            <person name="Lambert C."/>
            <person name="Evans K.J."/>
            <person name="Goesmann A."/>
            <person name="Meyer F."/>
            <person name="Sockett R.E."/>
            <person name="Schuster S.C."/>
        </authorList>
    </citation>
    <scope>NUCLEOTIDE SEQUENCE [LARGE SCALE GENOMIC DNA]</scope>
    <source>
        <strain>ATCC 15356 / DSM 50701 / NCIMB 9529 / HD100</strain>
    </source>
</reference>
<feature type="chain" id="PRO_0000264999" description="Putative 3-methyladenine DNA glycosylase">
    <location>
        <begin position="1"/>
        <end position="192"/>
    </location>
</feature>
<gene>
    <name type="ordered locus">Bd3793</name>
</gene>
<accession>Q6MGX6</accession>
<organism>
    <name type="scientific">Bdellovibrio bacteriovorus (strain ATCC 15356 / DSM 50701 / NCIMB 9529 / HD100)</name>
    <dbReference type="NCBI Taxonomy" id="264462"/>
    <lineage>
        <taxon>Bacteria</taxon>
        <taxon>Pseudomonadati</taxon>
        <taxon>Bdellovibrionota</taxon>
        <taxon>Bdellovibrionia</taxon>
        <taxon>Bdellovibrionales</taxon>
        <taxon>Pseudobdellovibrionaceae</taxon>
        <taxon>Bdellovibrio</taxon>
    </lineage>
</organism>
<evidence type="ECO:0000255" key="1">
    <source>
        <dbReference type="HAMAP-Rule" id="MF_00527"/>
    </source>
</evidence>
<protein>
    <recommendedName>
        <fullName evidence="1">Putative 3-methyladenine DNA glycosylase</fullName>
        <ecNumber evidence="1">3.2.2.-</ecNumber>
    </recommendedName>
</protein>
<name>3MGH_BDEBA</name>
<sequence>MILPQEFYFEDTTLVAQSLLGKVLNIRTDSGIQKARIIETEAYLGIEDPACHTFEDRRTERTKSMYLDGGHSYVYMIYGMYFCLNFVTRTHQHPEAVLIRAVEPLPAQENLRKKDLKTNGPGKLCKYYGITRKHDGLKLWKKSSDLYVTDEDFKVSKKQIIPTARVGVDYAGEAAKWPLRFYLRDHLFVSKK</sequence>
<keyword id="KW-0227">DNA damage</keyword>
<keyword id="KW-0234">DNA repair</keyword>
<keyword id="KW-0378">Hydrolase</keyword>
<keyword id="KW-1185">Reference proteome</keyword>
<comment type="similarity">
    <text evidence="1">Belongs to the DNA glycosylase MPG family.</text>
</comment>
<proteinExistence type="inferred from homology"/>
<dbReference type="EC" id="3.2.2.-" evidence="1"/>
<dbReference type="EMBL" id="BX842656">
    <property type="protein sequence ID" value="CAE81153.1"/>
    <property type="molecule type" value="Genomic_DNA"/>
</dbReference>
<dbReference type="RefSeq" id="WP_011166096.1">
    <property type="nucleotide sequence ID" value="NC_005363.1"/>
</dbReference>
<dbReference type="SMR" id="Q6MGX6"/>
<dbReference type="STRING" id="264462.Bd3793"/>
<dbReference type="GeneID" id="93014567"/>
<dbReference type="KEGG" id="bba:Bd3793"/>
<dbReference type="eggNOG" id="COG2094">
    <property type="taxonomic scope" value="Bacteria"/>
</dbReference>
<dbReference type="HOGENOM" id="CLU_060471_0_2_7"/>
<dbReference type="Proteomes" id="UP000008080">
    <property type="component" value="Chromosome"/>
</dbReference>
<dbReference type="GO" id="GO:0003905">
    <property type="term" value="F:alkylbase DNA N-glycosylase activity"/>
    <property type="evidence" value="ECO:0007669"/>
    <property type="project" value="InterPro"/>
</dbReference>
<dbReference type="GO" id="GO:0003677">
    <property type="term" value="F:DNA binding"/>
    <property type="evidence" value="ECO:0007669"/>
    <property type="project" value="InterPro"/>
</dbReference>
<dbReference type="GO" id="GO:0006284">
    <property type="term" value="P:base-excision repair"/>
    <property type="evidence" value="ECO:0007669"/>
    <property type="project" value="InterPro"/>
</dbReference>
<dbReference type="CDD" id="cd00540">
    <property type="entry name" value="AAG"/>
    <property type="match status" value="1"/>
</dbReference>
<dbReference type="FunFam" id="3.10.300.10:FF:000001">
    <property type="entry name" value="Putative 3-methyladenine DNA glycosylase"/>
    <property type="match status" value="1"/>
</dbReference>
<dbReference type="Gene3D" id="3.10.300.10">
    <property type="entry name" value="Methylpurine-DNA glycosylase (MPG)"/>
    <property type="match status" value="1"/>
</dbReference>
<dbReference type="HAMAP" id="MF_00527">
    <property type="entry name" value="3MGH"/>
    <property type="match status" value="1"/>
</dbReference>
<dbReference type="InterPro" id="IPR011034">
    <property type="entry name" value="Formyl_transferase-like_C_sf"/>
</dbReference>
<dbReference type="InterPro" id="IPR003180">
    <property type="entry name" value="MPG"/>
</dbReference>
<dbReference type="InterPro" id="IPR036995">
    <property type="entry name" value="MPG_sf"/>
</dbReference>
<dbReference type="NCBIfam" id="TIGR00567">
    <property type="entry name" value="3mg"/>
    <property type="match status" value="1"/>
</dbReference>
<dbReference type="PANTHER" id="PTHR10429">
    <property type="entry name" value="DNA-3-METHYLADENINE GLYCOSYLASE"/>
    <property type="match status" value="1"/>
</dbReference>
<dbReference type="PANTHER" id="PTHR10429:SF0">
    <property type="entry name" value="DNA-3-METHYLADENINE GLYCOSYLASE"/>
    <property type="match status" value="1"/>
</dbReference>
<dbReference type="Pfam" id="PF02245">
    <property type="entry name" value="Pur_DNA_glyco"/>
    <property type="match status" value="1"/>
</dbReference>
<dbReference type="SUPFAM" id="SSF50486">
    <property type="entry name" value="FMT C-terminal domain-like"/>
    <property type="match status" value="1"/>
</dbReference>